<name>Y246_STRZP</name>
<evidence type="ECO:0000255" key="1">
    <source>
        <dbReference type="HAMAP-Rule" id="MF_01507"/>
    </source>
</evidence>
<gene>
    <name type="ordered locus">SPP_0246</name>
</gene>
<reference key="1">
    <citation type="journal article" date="2010" name="Genome Biol.">
        <title>Structure and dynamics of the pan-genome of Streptococcus pneumoniae and closely related species.</title>
        <authorList>
            <person name="Donati C."/>
            <person name="Hiller N.L."/>
            <person name="Tettelin H."/>
            <person name="Muzzi A."/>
            <person name="Croucher N.J."/>
            <person name="Angiuoli S.V."/>
            <person name="Oggioni M."/>
            <person name="Dunning Hotopp J.C."/>
            <person name="Hu F.Z."/>
            <person name="Riley D.R."/>
            <person name="Covacci A."/>
            <person name="Mitchell T.J."/>
            <person name="Bentley S.D."/>
            <person name="Kilian M."/>
            <person name="Ehrlich G.D."/>
            <person name="Rappuoli R."/>
            <person name="Moxon E.R."/>
            <person name="Masignani V."/>
        </authorList>
    </citation>
    <scope>NUCLEOTIDE SEQUENCE [LARGE SCALE GENOMIC DNA]</scope>
    <source>
        <strain>P1031</strain>
    </source>
</reference>
<protein>
    <recommendedName>
        <fullName evidence="1">UPF0297 protein SPP_0246</fullName>
    </recommendedName>
</protein>
<accession>C1CI83</accession>
<feature type="chain" id="PRO_1000185050" description="UPF0297 protein SPP_0246">
    <location>
        <begin position="1"/>
        <end position="88"/>
    </location>
</feature>
<organism>
    <name type="scientific">Streptococcus pneumoniae (strain P1031)</name>
    <dbReference type="NCBI Taxonomy" id="488223"/>
    <lineage>
        <taxon>Bacteria</taxon>
        <taxon>Bacillati</taxon>
        <taxon>Bacillota</taxon>
        <taxon>Bacilli</taxon>
        <taxon>Lactobacillales</taxon>
        <taxon>Streptococcaceae</taxon>
        <taxon>Streptococcus</taxon>
    </lineage>
</organism>
<sequence>MGFTEETVRFKLDDSNKKEISETLTDVYASLNDKGYNPINQIVGYVLSGDPAYVPRYNNARNQIRKYERDEIVEELVRYYLKGQGVDL</sequence>
<comment type="similarity">
    <text evidence="1">Belongs to the UPF0297 family.</text>
</comment>
<dbReference type="EMBL" id="CP000920">
    <property type="protein sequence ID" value="ACO21509.1"/>
    <property type="molecule type" value="Genomic_DNA"/>
</dbReference>
<dbReference type="RefSeq" id="WP_000507059.1">
    <property type="nucleotide sequence ID" value="NC_012467.1"/>
</dbReference>
<dbReference type="SMR" id="C1CI83"/>
<dbReference type="KEGG" id="spp:SPP_0246"/>
<dbReference type="HOGENOM" id="CLU_162466_0_0_9"/>
<dbReference type="HAMAP" id="MF_01507">
    <property type="entry name" value="UPF0297"/>
    <property type="match status" value="1"/>
</dbReference>
<dbReference type="InterPro" id="IPR009309">
    <property type="entry name" value="IreB"/>
</dbReference>
<dbReference type="NCBIfam" id="NF003997">
    <property type="entry name" value="PRK05473.1"/>
    <property type="match status" value="1"/>
</dbReference>
<dbReference type="PANTHER" id="PTHR40067">
    <property type="entry name" value="UPF0297 PROTEIN YRZL"/>
    <property type="match status" value="1"/>
</dbReference>
<dbReference type="PANTHER" id="PTHR40067:SF1">
    <property type="entry name" value="UPF0297 PROTEIN YRZL"/>
    <property type="match status" value="1"/>
</dbReference>
<dbReference type="Pfam" id="PF06135">
    <property type="entry name" value="IreB"/>
    <property type="match status" value="1"/>
</dbReference>
<dbReference type="PIRSF" id="PIRSF037258">
    <property type="entry name" value="DUF965_bac"/>
    <property type="match status" value="1"/>
</dbReference>
<proteinExistence type="inferred from homology"/>